<organism>
    <name type="scientific">Bacillus cereus (strain B4264)</name>
    <dbReference type="NCBI Taxonomy" id="405532"/>
    <lineage>
        <taxon>Bacteria</taxon>
        <taxon>Bacillati</taxon>
        <taxon>Bacillota</taxon>
        <taxon>Bacilli</taxon>
        <taxon>Bacillales</taxon>
        <taxon>Bacillaceae</taxon>
        <taxon>Bacillus</taxon>
        <taxon>Bacillus cereus group</taxon>
    </lineage>
</organism>
<reference key="1">
    <citation type="submission" date="2008-10" db="EMBL/GenBank/DDBJ databases">
        <title>Genome sequence of Bacillus cereus B4264.</title>
        <authorList>
            <person name="Dodson R.J."/>
            <person name="Durkin A.S."/>
            <person name="Rosovitz M.J."/>
            <person name="Rasko D.A."/>
            <person name="Hoffmaster A."/>
            <person name="Ravel J."/>
            <person name="Sutton G."/>
        </authorList>
    </citation>
    <scope>NUCLEOTIDE SEQUENCE [LARGE SCALE GENOMIC DNA]</scope>
    <source>
        <strain>B4264</strain>
    </source>
</reference>
<accession>B7HGA2</accession>
<protein>
    <recommendedName>
        <fullName evidence="1">Antiholin-like protein LrgA</fullName>
    </recommendedName>
</protein>
<gene>
    <name evidence="1" type="primary">lrgA</name>
    <name type="ordered locus">BCB4264_A5564</name>
</gene>
<comment type="function">
    <text evidence="1">Inhibits the expression or activity of extracellular murein hydrolases by interacting, possibly with LrgB, with the holin-like protein CidA. The LrgAB and CidA proteins may affect the proton motive force of the membrane. May be involved in programmed cell death (PCD), possibly triggering PCD in response to antibiotics and environmental stresses.</text>
</comment>
<comment type="subcellular location">
    <subcellularLocation>
        <location evidence="1">Cell membrane</location>
        <topology evidence="1">Multi-pass membrane protein</topology>
    </subcellularLocation>
</comment>
<comment type="similarity">
    <text evidence="1">Belongs to the CidA/LrgA family. LrgA subfamily.</text>
</comment>
<feature type="chain" id="PRO_1000137345" description="Antiholin-like protein LrgA">
    <location>
        <begin position="1"/>
        <end position="143"/>
    </location>
</feature>
<feature type="transmembrane region" description="Helical" evidence="1">
    <location>
        <begin position="6"/>
        <end position="26"/>
    </location>
</feature>
<feature type="transmembrane region" description="Helical" evidence="1">
    <location>
        <begin position="30"/>
        <end position="50"/>
    </location>
</feature>
<feature type="transmembrane region" description="Helical" evidence="1">
    <location>
        <begin position="61"/>
        <end position="81"/>
    </location>
</feature>
<feature type="transmembrane region" description="Helical" evidence="1">
    <location>
        <begin position="97"/>
        <end position="117"/>
    </location>
</feature>
<proteinExistence type="inferred from homology"/>
<keyword id="KW-1003">Cell membrane</keyword>
<keyword id="KW-0204">Cytolysis</keyword>
<keyword id="KW-0472">Membrane</keyword>
<keyword id="KW-0812">Transmembrane</keyword>
<keyword id="KW-1133">Transmembrane helix</keyword>
<evidence type="ECO:0000255" key="1">
    <source>
        <dbReference type="HAMAP-Rule" id="MF_01141"/>
    </source>
</evidence>
<sequence>MSTKKVYSFLSQAFIFSAIMLISNIIATHLPIPMPSSVIGLVILFSLLCLKVIKLEQVESLGTALTGIIGFLFVPSGISVINSLGVMGQYFVQILTVIVVATVILLAVTGLFAQFILGKDEKETEDTKELKVVNKGRKHGKVA</sequence>
<dbReference type="EMBL" id="CP001176">
    <property type="protein sequence ID" value="ACK61350.1"/>
    <property type="molecule type" value="Genomic_DNA"/>
</dbReference>
<dbReference type="RefSeq" id="WP_000104901.1">
    <property type="nucleotide sequence ID" value="NZ_VEHB01000004.1"/>
</dbReference>
<dbReference type="SMR" id="B7HGA2"/>
<dbReference type="GeneID" id="93005686"/>
<dbReference type="KEGG" id="bcb:BCB4264_A5564"/>
<dbReference type="HOGENOM" id="CLU_113736_0_1_9"/>
<dbReference type="Proteomes" id="UP000007096">
    <property type="component" value="Chromosome"/>
</dbReference>
<dbReference type="GO" id="GO:0005886">
    <property type="term" value="C:plasma membrane"/>
    <property type="evidence" value="ECO:0007669"/>
    <property type="project" value="UniProtKB-SubCell"/>
</dbReference>
<dbReference type="GO" id="GO:0019835">
    <property type="term" value="P:cytolysis"/>
    <property type="evidence" value="ECO:0007669"/>
    <property type="project" value="UniProtKB-UniRule"/>
</dbReference>
<dbReference type="GO" id="GO:0031640">
    <property type="term" value="P:killing of cells of another organism"/>
    <property type="evidence" value="ECO:0007669"/>
    <property type="project" value="UniProtKB-KW"/>
</dbReference>
<dbReference type="GO" id="GO:0012501">
    <property type="term" value="P:programmed cell death"/>
    <property type="evidence" value="ECO:0007669"/>
    <property type="project" value="UniProtKB-UniRule"/>
</dbReference>
<dbReference type="HAMAP" id="MF_01141">
    <property type="entry name" value="LrgA"/>
    <property type="match status" value="1"/>
</dbReference>
<dbReference type="InterPro" id="IPR023736">
    <property type="entry name" value="Antiholin-like_LrgA"/>
</dbReference>
<dbReference type="InterPro" id="IPR005538">
    <property type="entry name" value="LrgA/CidA"/>
</dbReference>
<dbReference type="NCBIfam" id="NF003155">
    <property type="entry name" value="PRK04125.1"/>
    <property type="match status" value="1"/>
</dbReference>
<dbReference type="PANTHER" id="PTHR33931:SF4">
    <property type="entry name" value="ANTIHOLIN-LIKE PROTEIN LRGA"/>
    <property type="match status" value="1"/>
</dbReference>
<dbReference type="PANTHER" id="PTHR33931">
    <property type="entry name" value="HOLIN-LIKE PROTEIN CIDA-RELATED"/>
    <property type="match status" value="1"/>
</dbReference>
<dbReference type="Pfam" id="PF03788">
    <property type="entry name" value="LrgA"/>
    <property type="match status" value="1"/>
</dbReference>
<name>LRGA_BACC4</name>